<keyword id="KW-0249">Electron transport</keyword>
<keyword id="KW-0472">Membrane</keyword>
<keyword id="KW-0602">Photosynthesis</keyword>
<keyword id="KW-1185">Reference proteome</keyword>
<keyword id="KW-0793">Thylakoid</keyword>
<keyword id="KW-0812">Transmembrane</keyword>
<keyword id="KW-1133">Transmembrane helix</keyword>
<keyword id="KW-0813">Transport</keyword>
<dbReference type="EMBL" id="CP000100">
    <property type="protein sequence ID" value="ABB56507.1"/>
    <property type="status" value="ALT_INIT"/>
    <property type="molecule type" value="Genomic_DNA"/>
</dbReference>
<dbReference type="RefSeq" id="WP_011243356.1">
    <property type="nucleotide sequence ID" value="NZ_JACJTX010000002.1"/>
</dbReference>
<dbReference type="SMR" id="Q31R12"/>
<dbReference type="STRING" id="1140.Synpcc7942_0475"/>
<dbReference type="PaxDb" id="1140-Synpcc7942_0475"/>
<dbReference type="GeneID" id="72429298"/>
<dbReference type="KEGG" id="syf:Synpcc7942_0475"/>
<dbReference type="HOGENOM" id="CLU_215774_0_0_3"/>
<dbReference type="OrthoDB" id="560308at2"/>
<dbReference type="BioCyc" id="MetaCyc:SYNPCC7942_0475-MONOMER"/>
<dbReference type="BioCyc" id="SYNEL:SYNPCC7942_0475-MONOMER"/>
<dbReference type="Proteomes" id="UP000889800">
    <property type="component" value="Chromosome"/>
</dbReference>
<dbReference type="GO" id="GO:0009512">
    <property type="term" value="C:cytochrome b6f complex"/>
    <property type="evidence" value="ECO:0007669"/>
    <property type="project" value="InterPro"/>
</dbReference>
<dbReference type="GO" id="GO:0031676">
    <property type="term" value="C:plasma membrane-derived thylakoid membrane"/>
    <property type="evidence" value="ECO:0007669"/>
    <property type="project" value="UniProtKB-SubCell"/>
</dbReference>
<dbReference type="GO" id="GO:0045158">
    <property type="term" value="F:electron transporter, transferring electrons within cytochrome b6/f complex of photosystem II activity"/>
    <property type="evidence" value="ECO:0007669"/>
    <property type="project" value="InterPro"/>
</dbReference>
<dbReference type="GO" id="GO:0017004">
    <property type="term" value="P:cytochrome complex assembly"/>
    <property type="evidence" value="ECO:0007669"/>
    <property type="project" value="UniProtKB-UniRule"/>
</dbReference>
<dbReference type="GO" id="GO:0015979">
    <property type="term" value="P:photosynthesis"/>
    <property type="evidence" value="ECO:0007669"/>
    <property type="project" value="UniProtKB-KW"/>
</dbReference>
<dbReference type="HAMAP" id="MF_00395">
    <property type="entry name" value="Cytb6_f_PetN"/>
    <property type="match status" value="1"/>
</dbReference>
<dbReference type="InterPro" id="IPR036143">
    <property type="entry name" value="Cytochr_b6-f_cplx_su8_sf"/>
</dbReference>
<dbReference type="InterPro" id="IPR005497">
    <property type="entry name" value="Cytochrome_b6-f_cplx_su8"/>
</dbReference>
<dbReference type="NCBIfam" id="NF002709">
    <property type="entry name" value="PRK02529.1"/>
    <property type="match status" value="1"/>
</dbReference>
<dbReference type="NCBIfam" id="NF011331">
    <property type="entry name" value="PRK14747.1"/>
    <property type="match status" value="1"/>
</dbReference>
<dbReference type="Pfam" id="PF03742">
    <property type="entry name" value="PetN"/>
    <property type="match status" value="1"/>
</dbReference>
<dbReference type="SUPFAM" id="SSF103451">
    <property type="entry name" value="PetN subunit of the cytochrome b6f complex"/>
    <property type="match status" value="1"/>
</dbReference>
<evidence type="ECO:0000255" key="1">
    <source>
        <dbReference type="HAMAP-Rule" id="MF_00395"/>
    </source>
</evidence>
<evidence type="ECO:0000305" key="2"/>
<protein>
    <recommendedName>
        <fullName evidence="1">Cytochrome b6-f complex subunit 8</fullName>
    </recommendedName>
    <alternativeName>
        <fullName evidence="1">Cytochrome b6-f complex subunit PetN</fullName>
    </alternativeName>
    <alternativeName>
        <fullName evidence="1">Cytochrome b6-f complex subunit VIII</fullName>
    </alternativeName>
</protein>
<organism>
    <name type="scientific">Synechococcus elongatus (strain ATCC 33912 / PCC 7942 / FACHB-805)</name>
    <name type="common">Anacystis nidulans R2</name>
    <dbReference type="NCBI Taxonomy" id="1140"/>
    <lineage>
        <taxon>Bacteria</taxon>
        <taxon>Bacillati</taxon>
        <taxon>Cyanobacteriota</taxon>
        <taxon>Cyanophyceae</taxon>
        <taxon>Synechococcales</taxon>
        <taxon>Synechococcaceae</taxon>
        <taxon>Synechococcus</taxon>
    </lineage>
</organism>
<gene>
    <name evidence="1" type="primary">petN</name>
    <name type="ordered locus">Synpcc7942_0475</name>
</gene>
<accession>Q31R12</accession>
<name>PETN_SYNE7</name>
<comment type="function">
    <text evidence="1">Component of the cytochrome b6-f complex, which mediates electron transfer between photosystem II (PSII) and photosystem I (PSI), cyclic electron flow around PSI, and state transitions.</text>
</comment>
<comment type="subunit">
    <text evidence="1">The 4 large subunits of the cytochrome b6-f complex are cytochrome b6, subunit IV (17 kDa polypeptide, PetD), cytochrome f and the Rieske protein, while the 4 small subunits are PetG, PetL, PetM and PetN. The complex functions as a dimer.</text>
</comment>
<comment type="subcellular location">
    <subcellularLocation>
        <location evidence="1">Cellular thylakoid membrane</location>
        <topology evidence="1">Single-pass membrane protein</topology>
    </subcellularLocation>
</comment>
<comment type="similarity">
    <text evidence="1">Belongs to the PetN family.</text>
</comment>
<comment type="sequence caution" evidence="2">
    <conflict type="erroneous initiation">
        <sequence resource="EMBL-CDS" id="ABB56507"/>
    </conflict>
</comment>
<reference key="1">
    <citation type="submission" date="2005-08" db="EMBL/GenBank/DDBJ databases">
        <title>Complete sequence of chromosome 1 of Synechococcus elongatus PCC 7942.</title>
        <authorList>
            <consortium name="US DOE Joint Genome Institute"/>
            <person name="Copeland A."/>
            <person name="Lucas S."/>
            <person name="Lapidus A."/>
            <person name="Barry K."/>
            <person name="Detter J.C."/>
            <person name="Glavina T."/>
            <person name="Hammon N."/>
            <person name="Israni S."/>
            <person name="Pitluck S."/>
            <person name="Schmutz J."/>
            <person name="Larimer F."/>
            <person name="Land M."/>
            <person name="Kyrpides N."/>
            <person name="Lykidis A."/>
            <person name="Golden S."/>
            <person name="Richardson P."/>
        </authorList>
    </citation>
    <scope>NUCLEOTIDE SEQUENCE [LARGE SCALE GENOMIC DNA]</scope>
    <source>
        <strain>ATCC 33912 / PCC 7942 / FACHB-805</strain>
    </source>
</reference>
<proteinExistence type="inferred from homology"/>
<sequence length="34" mass="3678">MELLTFGWAALLAVFTFSLAMVVWGRNGDGSIGF</sequence>
<feature type="chain" id="PRO_5000100996" description="Cytochrome b6-f complex subunit 8">
    <location>
        <begin position="1"/>
        <end position="34"/>
    </location>
</feature>
<feature type="transmembrane region" description="Helical" evidence="1">
    <location>
        <begin position="3"/>
        <end position="23"/>
    </location>
</feature>